<feature type="transit peptide" description="Mitochondrion" evidence="2">
    <location>
        <begin position="1"/>
        <end status="unknown"/>
    </location>
</feature>
<feature type="chain" id="PRO_0000000530" description="Probable glutaryl-CoA dehydrogenase, mitochondrial">
    <location>
        <begin status="unknown"/>
        <end position="409"/>
    </location>
</feature>
<feature type="active site" description="Proton acceptor" evidence="1">
    <location>
        <position position="388"/>
    </location>
</feature>
<feature type="binding site" evidence="1">
    <location>
        <begin position="110"/>
        <end position="111"/>
    </location>
    <ligand>
        <name>substrate</name>
    </ligand>
</feature>
<feature type="binding site" evidence="1">
    <location>
        <begin position="149"/>
        <end position="152"/>
    </location>
    <ligand>
        <name>FAD</name>
        <dbReference type="ChEBI" id="CHEBI:57692"/>
    </ligand>
</feature>
<feature type="binding site" evidence="1">
    <location>
        <position position="158"/>
    </location>
    <ligand>
        <name>FAD</name>
        <dbReference type="ChEBI" id="CHEBI:57692"/>
    </ligand>
</feature>
<feature type="binding site" evidence="1">
    <location>
        <position position="158"/>
    </location>
    <ligand>
        <name>substrate</name>
    </ligand>
</feature>
<feature type="binding site" evidence="1">
    <location>
        <begin position="184"/>
        <end position="186"/>
    </location>
    <ligand>
        <name>FAD</name>
        <dbReference type="ChEBI" id="CHEBI:57692"/>
    </ligand>
</feature>
<feature type="binding site" evidence="1">
    <location>
        <begin position="261"/>
        <end position="265"/>
    </location>
    <ligand>
        <name>substrate</name>
    </ligand>
</feature>
<feature type="binding site" evidence="1">
    <location>
        <position position="268"/>
    </location>
    <ligand>
        <name>substrate</name>
    </ligand>
</feature>
<feature type="binding site" evidence="1">
    <location>
        <position position="390"/>
    </location>
    <ligand>
        <name>FAD</name>
        <dbReference type="ChEBI" id="CHEBI:57692"/>
    </ligand>
</feature>
<feature type="binding site" evidence="1">
    <location>
        <position position="408"/>
    </location>
    <ligand>
        <name>FAD</name>
        <dbReference type="ChEBI" id="CHEBI:57692"/>
    </ligand>
</feature>
<keyword id="KW-0274">FAD</keyword>
<keyword id="KW-0285">Flavoprotein</keyword>
<keyword id="KW-0496">Mitochondrion</keyword>
<keyword id="KW-0560">Oxidoreductase</keyword>
<keyword id="KW-1185">Reference proteome</keyword>
<keyword id="KW-0809">Transit peptide</keyword>
<gene>
    <name type="ORF">F54D5.7</name>
</gene>
<comment type="catalytic activity">
    <reaction>
        <text>glutaryl-CoA + oxidized [electron-transfer flavoprotein] + 2 H(+) = (2E)-butenoyl-CoA + reduced [electron-transfer flavoprotein] + CO2</text>
        <dbReference type="Rhea" id="RHEA:13389"/>
        <dbReference type="Rhea" id="RHEA-COMP:10685"/>
        <dbReference type="Rhea" id="RHEA-COMP:10686"/>
        <dbReference type="ChEBI" id="CHEBI:15378"/>
        <dbReference type="ChEBI" id="CHEBI:16526"/>
        <dbReference type="ChEBI" id="CHEBI:57332"/>
        <dbReference type="ChEBI" id="CHEBI:57378"/>
        <dbReference type="ChEBI" id="CHEBI:57692"/>
        <dbReference type="ChEBI" id="CHEBI:58307"/>
        <dbReference type="EC" id="1.3.8.6"/>
    </reaction>
</comment>
<comment type="cofactor">
    <cofactor evidence="1">
        <name>FAD</name>
        <dbReference type="ChEBI" id="CHEBI:57692"/>
    </cofactor>
</comment>
<comment type="pathway">
    <text>Amino-acid metabolism; lysine degradation.</text>
</comment>
<comment type="pathway">
    <text>Amino-acid metabolism; tryptophan metabolism.</text>
</comment>
<comment type="subcellular location">
    <subcellularLocation>
        <location evidence="3">Mitochondrion matrix</location>
    </subcellularLocation>
</comment>
<comment type="similarity">
    <text evidence="3">Belongs to the acyl-CoA dehydrogenase family.</text>
</comment>
<sequence length="409" mass="44964">MLTRGFTSIGKIASRGLSSTFYQDAFQLSDQLTEDERSLMLSAREYCQERLLPRVTEAYRTEKFDPSLIPEMGSMGLLGAPYQGYGCAGTSTVGYGLIAREVERVDSGYRSTMSVQTSLVIGPIYNYGSEDQKQKYIPDLASGKKIGCFGLTEPNHGSNPGGMETKATWDETTKTYKLNGSKTWISNSPVSDVMVVWARSARHNNKIKGFILERGMKGLTTPKIEGKLSLRASITGQIAMDDVPVPEENLLPNAEGLQGPFGCLNNARLGIAWGALGAAEECFHLARQYTLDRQQFGRPLAQNQLMQLKMADMLTEISLGLQGCLRVSRLKDEGKVQSEQISIIKRNSCGKALEVARKARDMLGGNGIVDEYHIMRHMVNLETVNTYEGTHDVHALILGRAITGLNGFC</sequence>
<name>GCDH_CAEEL</name>
<proteinExistence type="inferred from homology"/>
<organism>
    <name type="scientific">Caenorhabditis elegans</name>
    <dbReference type="NCBI Taxonomy" id="6239"/>
    <lineage>
        <taxon>Eukaryota</taxon>
        <taxon>Metazoa</taxon>
        <taxon>Ecdysozoa</taxon>
        <taxon>Nematoda</taxon>
        <taxon>Chromadorea</taxon>
        <taxon>Rhabditida</taxon>
        <taxon>Rhabditina</taxon>
        <taxon>Rhabditomorpha</taxon>
        <taxon>Rhabditoidea</taxon>
        <taxon>Rhabditidae</taxon>
        <taxon>Peloderinae</taxon>
        <taxon>Caenorhabditis</taxon>
    </lineage>
</organism>
<evidence type="ECO:0000250" key="1"/>
<evidence type="ECO:0000255" key="2"/>
<evidence type="ECO:0000305" key="3"/>
<dbReference type="EC" id="1.3.8.6"/>
<dbReference type="EMBL" id="Z66513">
    <property type="protein sequence ID" value="CAA91333.1"/>
    <property type="molecule type" value="Genomic_DNA"/>
</dbReference>
<dbReference type="PIR" id="T22647">
    <property type="entry name" value="T22647"/>
</dbReference>
<dbReference type="RefSeq" id="NP_001369890.1">
    <property type="nucleotide sequence ID" value="NM_001383957.2"/>
</dbReference>
<dbReference type="RefSeq" id="NP_496469.1">
    <property type="nucleotide sequence ID" value="NM_064068.5"/>
</dbReference>
<dbReference type="SMR" id="Q20772"/>
<dbReference type="BioGRID" id="40074">
    <property type="interactions" value="9"/>
</dbReference>
<dbReference type="DIP" id="DIP-25054N"/>
<dbReference type="FunCoup" id="Q20772">
    <property type="interactions" value="1912"/>
</dbReference>
<dbReference type="IntAct" id="Q20772">
    <property type="interactions" value="3"/>
</dbReference>
<dbReference type="STRING" id="6239.F54D5.7.2"/>
<dbReference type="PaxDb" id="6239-F54D5.7.2"/>
<dbReference type="PeptideAtlas" id="Q20772"/>
<dbReference type="EnsemblMetazoa" id="F54D5.7.1">
    <property type="protein sequence ID" value="F54D5.7.1"/>
    <property type="gene ID" value="WBGene00010052"/>
</dbReference>
<dbReference type="GeneID" id="174768"/>
<dbReference type="UCSC" id="F54D5.7.1">
    <property type="organism name" value="c. elegans"/>
</dbReference>
<dbReference type="AGR" id="WB:WBGene00010052"/>
<dbReference type="WormBase" id="F54D5.7">
    <property type="protein sequence ID" value="CE03411"/>
    <property type="gene ID" value="WBGene00010052"/>
</dbReference>
<dbReference type="eggNOG" id="KOG0138">
    <property type="taxonomic scope" value="Eukaryota"/>
</dbReference>
<dbReference type="GeneTree" id="ENSGT00940000158116"/>
<dbReference type="HOGENOM" id="CLU_018204_8_0_1"/>
<dbReference type="InParanoid" id="Q20772"/>
<dbReference type="OMA" id="HMMNLES"/>
<dbReference type="OrthoDB" id="435240at2759"/>
<dbReference type="PhylomeDB" id="Q20772"/>
<dbReference type="Reactome" id="R-CEL-71064">
    <property type="pathway name" value="Lysine catabolism"/>
</dbReference>
<dbReference type="UniPathway" id="UPA00224"/>
<dbReference type="UniPathway" id="UPA00225"/>
<dbReference type="PRO" id="PR:Q20772"/>
<dbReference type="Proteomes" id="UP000001940">
    <property type="component" value="Chromosome II"/>
</dbReference>
<dbReference type="Bgee" id="WBGene00010052">
    <property type="expression patterns" value="Expressed in larva and 4 other cell types or tissues"/>
</dbReference>
<dbReference type="GO" id="GO:0005759">
    <property type="term" value="C:mitochondrial matrix"/>
    <property type="evidence" value="ECO:0007669"/>
    <property type="project" value="UniProtKB-SubCell"/>
</dbReference>
<dbReference type="GO" id="GO:0000062">
    <property type="term" value="F:fatty-acyl-CoA binding"/>
    <property type="evidence" value="ECO:0000318"/>
    <property type="project" value="GO_Central"/>
</dbReference>
<dbReference type="GO" id="GO:0050660">
    <property type="term" value="F:flavin adenine dinucleotide binding"/>
    <property type="evidence" value="ECO:0000318"/>
    <property type="project" value="GO_Central"/>
</dbReference>
<dbReference type="GO" id="GO:0004361">
    <property type="term" value="F:glutaryl-CoA dehydrogenase activity"/>
    <property type="evidence" value="ECO:0000318"/>
    <property type="project" value="GO_Central"/>
</dbReference>
<dbReference type="GO" id="GO:0033539">
    <property type="term" value="P:fatty acid beta-oxidation using acyl-CoA dehydrogenase"/>
    <property type="evidence" value="ECO:0000318"/>
    <property type="project" value="GO_Central"/>
</dbReference>
<dbReference type="GO" id="GO:0046949">
    <property type="term" value="P:fatty-acyl-CoA biosynthetic process"/>
    <property type="evidence" value="ECO:0000318"/>
    <property type="project" value="GO_Central"/>
</dbReference>
<dbReference type="GO" id="GO:0006568">
    <property type="term" value="P:L-tryptophan metabolic process"/>
    <property type="evidence" value="ECO:0007669"/>
    <property type="project" value="UniProtKB-UniPathway"/>
</dbReference>
<dbReference type="CDD" id="cd01151">
    <property type="entry name" value="GCD"/>
    <property type="match status" value="1"/>
</dbReference>
<dbReference type="FunFam" id="1.20.140.10:FF:000006">
    <property type="entry name" value="Glutaryl-CoA dehydrogenase, mitochondrial"/>
    <property type="match status" value="1"/>
</dbReference>
<dbReference type="FunFam" id="2.40.110.10:FF:000008">
    <property type="entry name" value="Glutaryl-CoA dehydrogenase, mitochondrial"/>
    <property type="match status" value="1"/>
</dbReference>
<dbReference type="FunFam" id="1.10.540.10:FF:000003">
    <property type="entry name" value="glutaryl-CoA dehydrogenase, mitochondrial"/>
    <property type="match status" value="1"/>
</dbReference>
<dbReference type="Gene3D" id="1.10.540.10">
    <property type="entry name" value="Acyl-CoA dehydrogenase/oxidase, N-terminal domain"/>
    <property type="match status" value="1"/>
</dbReference>
<dbReference type="Gene3D" id="2.40.110.10">
    <property type="entry name" value="Butyryl-CoA Dehydrogenase, subunit A, domain 2"/>
    <property type="match status" value="1"/>
</dbReference>
<dbReference type="Gene3D" id="1.20.140.10">
    <property type="entry name" value="Butyryl-CoA Dehydrogenase, subunit A, domain 3"/>
    <property type="match status" value="1"/>
</dbReference>
<dbReference type="InterPro" id="IPR006089">
    <property type="entry name" value="Acyl-CoA_DH_CS"/>
</dbReference>
<dbReference type="InterPro" id="IPR006091">
    <property type="entry name" value="Acyl-CoA_Oxase/DH_mid-dom"/>
</dbReference>
<dbReference type="InterPro" id="IPR046373">
    <property type="entry name" value="Acyl-CoA_Oxase/DH_mid-dom_sf"/>
</dbReference>
<dbReference type="InterPro" id="IPR036250">
    <property type="entry name" value="AcylCo_DH-like_C"/>
</dbReference>
<dbReference type="InterPro" id="IPR009075">
    <property type="entry name" value="AcylCo_DH/oxidase_C"/>
</dbReference>
<dbReference type="InterPro" id="IPR013786">
    <property type="entry name" value="AcylCoA_DH/ox_N"/>
</dbReference>
<dbReference type="InterPro" id="IPR037069">
    <property type="entry name" value="AcylCoA_DH/ox_N_sf"/>
</dbReference>
<dbReference type="InterPro" id="IPR009100">
    <property type="entry name" value="AcylCoA_DH/oxidase_NM_dom_sf"/>
</dbReference>
<dbReference type="InterPro" id="IPR052033">
    <property type="entry name" value="Glutaryl-CoA_DH_mitochondrial"/>
</dbReference>
<dbReference type="PANTHER" id="PTHR42807">
    <property type="entry name" value="GLUTARYL-COA DEHYDROGENASE, MITOCHONDRIAL"/>
    <property type="match status" value="1"/>
</dbReference>
<dbReference type="PANTHER" id="PTHR42807:SF1">
    <property type="entry name" value="GLUTARYL-COA DEHYDROGENASE, MITOCHONDRIAL"/>
    <property type="match status" value="1"/>
</dbReference>
<dbReference type="Pfam" id="PF00441">
    <property type="entry name" value="Acyl-CoA_dh_1"/>
    <property type="match status" value="1"/>
</dbReference>
<dbReference type="Pfam" id="PF02770">
    <property type="entry name" value="Acyl-CoA_dh_M"/>
    <property type="match status" value="1"/>
</dbReference>
<dbReference type="Pfam" id="PF02771">
    <property type="entry name" value="Acyl-CoA_dh_N"/>
    <property type="match status" value="1"/>
</dbReference>
<dbReference type="SUPFAM" id="SSF47203">
    <property type="entry name" value="Acyl-CoA dehydrogenase C-terminal domain-like"/>
    <property type="match status" value="1"/>
</dbReference>
<dbReference type="SUPFAM" id="SSF56645">
    <property type="entry name" value="Acyl-CoA dehydrogenase NM domain-like"/>
    <property type="match status" value="1"/>
</dbReference>
<dbReference type="PROSITE" id="PS00073">
    <property type="entry name" value="ACYL_COA_DH_2"/>
    <property type="match status" value="1"/>
</dbReference>
<reference key="1">
    <citation type="journal article" date="1998" name="Science">
        <title>Genome sequence of the nematode C. elegans: a platform for investigating biology.</title>
        <authorList>
            <consortium name="The C. elegans sequencing consortium"/>
        </authorList>
    </citation>
    <scope>NUCLEOTIDE SEQUENCE [LARGE SCALE GENOMIC DNA]</scope>
    <source>
        <strain>Bristol N2</strain>
    </source>
</reference>
<protein>
    <recommendedName>
        <fullName>Probable glutaryl-CoA dehydrogenase, mitochondrial</fullName>
        <shortName>GCD</shortName>
        <ecNumber>1.3.8.6</ecNumber>
    </recommendedName>
</protein>
<accession>Q20772</accession>